<keyword id="KW-1003">Cell membrane</keyword>
<keyword id="KW-0255">Endonuclease</keyword>
<keyword id="KW-0378">Hydrolase</keyword>
<keyword id="KW-0472">Membrane</keyword>
<keyword id="KW-0540">Nuclease</keyword>
<keyword id="KW-0694">RNA-binding</keyword>
<keyword id="KW-0812">Transmembrane</keyword>
<keyword id="KW-1133">Transmembrane helix</keyword>
<reference key="1">
    <citation type="journal article" date="2007" name="J. Bacteriol.">
        <title>Genome sequence and analysis of the soil cellulolytic actinomycete Thermobifida fusca YX.</title>
        <authorList>
            <person name="Lykidis A."/>
            <person name="Mavromatis K."/>
            <person name="Ivanova N."/>
            <person name="Anderson I."/>
            <person name="Land M."/>
            <person name="DiBartolo G."/>
            <person name="Martinez M."/>
            <person name="Lapidus A."/>
            <person name="Lucas S."/>
            <person name="Copeland A."/>
            <person name="Richardson P."/>
            <person name="Wilson D.B."/>
            <person name="Kyrpides N."/>
        </authorList>
    </citation>
    <scope>NUCLEOTIDE SEQUENCE [LARGE SCALE GENOMIC DNA]</scope>
    <source>
        <strain>YX</strain>
    </source>
</reference>
<comment type="function">
    <text evidence="1">Endoribonuclease that initiates mRNA decay.</text>
</comment>
<comment type="subcellular location">
    <subcellularLocation>
        <location evidence="1">Cell membrane</location>
        <topology evidence="1">Single-pass membrane protein</topology>
    </subcellularLocation>
</comment>
<comment type="similarity">
    <text evidence="1">Belongs to the RNase Y family.</text>
</comment>
<gene>
    <name evidence="1" type="primary">rny</name>
    <name type="ordered locus">Tfu_0805</name>
</gene>
<evidence type="ECO:0000255" key="1">
    <source>
        <dbReference type="HAMAP-Rule" id="MF_00335"/>
    </source>
</evidence>
<evidence type="ECO:0000255" key="2">
    <source>
        <dbReference type="PROSITE-ProRule" id="PRU01175"/>
    </source>
</evidence>
<feature type="chain" id="PRO_0000344963" description="Ribonuclease Y">
    <location>
        <begin position="1"/>
        <end position="501"/>
    </location>
</feature>
<feature type="transmembrane region" description="Helical" evidence="1">
    <location>
        <begin position="7"/>
        <end position="27"/>
    </location>
</feature>
<feature type="domain" description="KH" evidence="1">
    <location>
        <begin position="190"/>
        <end position="256"/>
    </location>
</feature>
<feature type="domain" description="HD" evidence="2">
    <location>
        <begin position="316"/>
        <end position="409"/>
    </location>
</feature>
<protein>
    <recommendedName>
        <fullName evidence="1">Ribonuclease Y</fullName>
        <shortName evidence="1">RNase Y</shortName>
        <ecNumber evidence="1">3.1.-.-</ecNumber>
    </recommendedName>
</protein>
<accession>Q47RS4</accession>
<organism>
    <name type="scientific">Thermobifida fusca (strain YX)</name>
    <dbReference type="NCBI Taxonomy" id="269800"/>
    <lineage>
        <taxon>Bacteria</taxon>
        <taxon>Bacillati</taxon>
        <taxon>Actinomycetota</taxon>
        <taxon>Actinomycetes</taxon>
        <taxon>Streptosporangiales</taxon>
        <taxon>Nocardiopsidaceae</taxon>
        <taxon>Thermobifida</taxon>
    </lineage>
</organism>
<name>RNY_THEFY</name>
<proteinExistence type="inferred from homology"/>
<dbReference type="EC" id="3.1.-.-" evidence="1"/>
<dbReference type="EMBL" id="CP000088">
    <property type="protein sequence ID" value="AAZ54843.1"/>
    <property type="molecule type" value="Genomic_DNA"/>
</dbReference>
<dbReference type="RefSeq" id="WP_011291252.1">
    <property type="nucleotide sequence ID" value="NC_007333.1"/>
</dbReference>
<dbReference type="SMR" id="Q47RS4"/>
<dbReference type="STRING" id="269800.Tfu_0805"/>
<dbReference type="KEGG" id="tfu:Tfu_0805"/>
<dbReference type="eggNOG" id="COG1418">
    <property type="taxonomic scope" value="Bacteria"/>
</dbReference>
<dbReference type="eggNOG" id="COG1566">
    <property type="taxonomic scope" value="Bacteria"/>
</dbReference>
<dbReference type="HOGENOM" id="CLU_028328_1_0_11"/>
<dbReference type="OrthoDB" id="9803205at2"/>
<dbReference type="GO" id="GO:0005886">
    <property type="term" value="C:plasma membrane"/>
    <property type="evidence" value="ECO:0007669"/>
    <property type="project" value="UniProtKB-SubCell"/>
</dbReference>
<dbReference type="GO" id="GO:0003723">
    <property type="term" value="F:RNA binding"/>
    <property type="evidence" value="ECO:0007669"/>
    <property type="project" value="UniProtKB-UniRule"/>
</dbReference>
<dbReference type="GO" id="GO:0004521">
    <property type="term" value="F:RNA endonuclease activity"/>
    <property type="evidence" value="ECO:0007669"/>
    <property type="project" value="UniProtKB-UniRule"/>
</dbReference>
<dbReference type="GO" id="GO:0006402">
    <property type="term" value="P:mRNA catabolic process"/>
    <property type="evidence" value="ECO:0007669"/>
    <property type="project" value="UniProtKB-UniRule"/>
</dbReference>
<dbReference type="CDD" id="cd00077">
    <property type="entry name" value="HDc"/>
    <property type="match status" value="1"/>
</dbReference>
<dbReference type="CDD" id="cd22431">
    <property type="entry name" value="KH-I_RNaseY"/>
    <property type="match status" value="1"/>
</dbReference>
<dbReference type="Gene3D" id="1.10.3210.10">
    <property type="entry name" value="Hypothetical protein af1432"/>
    <property type="match status" value="1"/>
</dbReference>
<dbReference type="HAMAP" id="MF_00335">
    <property type="entry name" value="RNase_Y"/>
    <property type="match status" value="1"/>
</dbReference>
<dbReference type="InterPro" id="IPR003607">
    <property type="entry name" value="HD/PDEase_dom"/>
</dbReference>
<dbReference type="InterPro" id="IPR006674">
    <property type="entry name" value="HD_domain"/>
</dbReference>
<dbReference type="InterPro" id="IPR006675">
    <property type="entry name" value="HDIG_dom"/>
</dbReference>
<dbReference type="InterPro" id="IPR004087">
    <property type="entry name" value="KH_dom"/>
</dbReference>
<dbReference type="InterPro" id="IPR004088">
    <property type="entry name" value="KH_dom_type_1"/>
</dbReference>
<dbReference type="InterPro" id="IPR036612">
    <property type="entry name" value="KH_dom_type_1_sf"/>
</dbReference>
<dbReference type="InterPro" id="IPR017705">
    <property type="entry name" value="Ribonuclease_Y"/>
</dbReference>
<dbReference type="InterPro" id="IPR022711">
    <property type="entry name" value="RNase_Y_N"/>
</dbReference>
<dbReference type="NCBIfam" id="TIGR00277">
    <property type="entry name" value="HDIG"/>
    <property type="match status" value="1"/>
</dbReference>
<dbReference type="NCBIfam" id="TIGR03319">
    <property type="entry name" value="RNase_Y"/>
    <property type="match status" value="1"/>
</dbReference>
<dbReference type="PANTHER" id="PTHR12826">
    <property type="entry name" value="RIBONUCLEASE Y"/>
    <property type="match status" value="1"/>
</dbReference>
<dbReference type="PANTHER" id="PTHR12826:SF15">
    <property type="entry name" value="RIBONUCLEASE Y"/>
    <property type="match status" value="1"/>
</dbReference>
<dbReference type="Pfam" id="PF01966">
    <property type="entry name" value="HD"/>
    <property type="match status" value="1"/>
</dbReference>
<dbReference type="Pfam" id="PF00013">
    <property type="entry name" value="KH_1"/>
    <property type="match status" value="1"/>
</dbReference>
<dbReference type="Pfam" id="PF12072">
    <property type="entry name" value="RNase_Y_N"/>
    <property type="match status" value="1"/>
</dbReference>
<dbReference type="SMART" id="SM00471">
    <property type="entry name" value="HDc"/>
    <property type="match status" value="1"/>
</dbReference>
<dbReference type="SMART" id="SM00322">
    <property type="entry name" value="KH"/>
    <property type="match status" value="1"/>
</dbReference>
<dbReference type="SUPFAM" id="SSF54791">
    <property type="entry name" value="Eukaryotic type KH-domain (KH-domain type I)"/>
    <property type="match status" value="1"/>
</dbReference>
<dbReference type="SUPFAM" id="SSF109604">
    <property type="entry name" value="HD-domain/PDEase-like"/>
    <property type="match status" value="1"/>
</dbReference>
<dbReference type="PROSITE" id="PS51831">
    <property type="entry name" value="HD"/>
    <property type="match status" value="1"/>
</dbReference>
<sequence>MDGVADLVVIALLGALTLLTAGHVLALRSRSRAVAAQAQQWADRIRADAENAARSHQDRLLAEAAAYRAELDRREQRIAAQEQRIERELRRLDAARRQLDERTAQLDQRAAELARLAEERRAVLEQAAALTAEEAKAALVADIVDQAKREAAVLVRAIERDARTNGEARARRIISLAIQRLAGEQTSESVVRAVPLPEEAMKGRIIGREGRNIRAFETVTGVDLIVDDTPGVVLLSCFHPLRRETARLTLEKLVADGRINPHRIEEAYEASRREVEQQCVRAGEDALLEVGISDMHPELVALLGQLRYRTSYGQNVLAHLVESAHLAGMMAAELGADVPLAKRCALLHDIGKALTHEVEGSHAVIGAQLARRYGECEEVAHAIEAHHNEVEARTVEAVLTQAADAISGGRPGARRASMESYVKRLQRMEEIAYAVSDGVEKVFVMQAGREIRVMVQPEAVDDVQAQVIARDIAKRVEEELTYPGQVRVTVIRESRAVETAR</sequence>